<organism>
    <name type="scientific">Cocos nucifera</name>
    <name type="common">Coconut palm</name>
    <dbReference type="NCBI Taxonomy" id="13894"/>
    <lineage>
        <taxon>Eukaryota</taxon>
        <taxon>Viridiplantae</taxon>
        <taxon>Streptophyta</taxon>
        <taxon>Embryophyta</taxon>
        <taxon>Tracheophyta</taxon>
        <taxon>Spermatophyta</taxon>
        <taxon>Magnoliopsida</taxon>
        <taxon>Liliopsida</taxon>
        <taxon>Arecaceae</taxon>
        <taxon>Arecoideae</taxon>
        <taxon>Cocoseae</taxon>
        <taxon>Attaleinae</taxon>
        <taxon>Cocos</taxon>
    </lineage>
</organism>
<protein>
    <recommendedName>
        <fullName evidence="2">Antimicrobial peptide 1</fullName>
        <shortName evidence="2">Cn-AMP1</shortName>
    </recommendedName>
</protein>
<proteinExistence type="evidence at protein level"/>
<sequence length="9" mass="876">SVAGRAQGM</sequence>
<keyword id="KW-0002">3D-structure</keyword>
<keyword id="KW-0929">Antimicrobial</keyword>
<keyword id="KW-0903">Direct protein sequencing</keyword>
<keyword id="KW-0611">Plant defense</keyword>
<keyword id="KW-0964">Secreted</keyword>
<dbReference type="PDB" id="2N0V">
    <property type="method" value="NMR"/>
    <property type="chains" value="A=1-9"/>
</dbReference>
<dbReference type="PDBsum" id="2N0V"/>
<dbReference type="BMRB" id="P86705"/>
<dbReference type="GO" id="GO:0005615">
    <property type="term" value="C:extracellular space"/>
    <property type="evidence" value="ECO:0000314"/>
    <property type="project" value="UniProtKB"/>
</dbReference>
<dbReference type="GO" id="GO:0050829">
    <property type="term" value="P:defense response to Gram-negative bacterium"/>
    <property type="evidence" value="ECO:0000314"/>
    <property type="project" value="UniProtKB"/>
</dbReference>
<dbReference type="GO" id="GO:0050830">
    <property type="term" value="P:defense response to Gram-positive bacterium"/>
    <property type="evidence" value="ECO:0000314"/>
    <property type="project" value="UniProtKB"/>
</dbReference>
<reference evidence="3" key="1">
    <citation type="journal article" date="2009" name="Peptides">
        <title>Identification and structural insights of three novel antimicrobial peptides isolated from green coconut water.</title>
        <authorList>
            <person name="Mandal S.M."/>
            <person name="Dey S."/>
            <person name="Mandal M."/>
            <person name="Sarkar S."/>
            <person name="Maria-Neto S."/>
            <person name="Franco O.L."/>
        </authorList>
    </citation>
    <scope>PROTEIN SEQUENCE</scope>
    <scope>FUNCTION</scope>
    <scope>SUBUNIT</scope>
    <scope>SUBCELLULAR LOCATION</scope>
    <scope>TISSUE SPECIFICITY</scope>
    <scope>MASS SPECTROMETRY</scope>
    <source>
        <tissue evidence="1">Endosperm</tissue>
    </source>
</reference>
<accession>P86705</accession>
<feature type="peptide" id="PRO_0000399051" description="Antimicrobial peptide 1" evidence="1">
    <location>
        <begin position="1"/>
        <end position="9"/>
    </location>
</feature>
<feature type="helix" evidence="4">
    <location>
        <begin position="2"/>
        <end position="4"/>
    </location>
</feature>
<feature type="turn" evidence="4">
    <location>
        <begin position="5"/>
        <end position="8"/>
    </location>
</feature>
<comment type="function">
    <text evidence="1">Has antimicrobial activity against Gram-positive bacteria B.subtilis (MIC=76 ug/ml) and S.aureus (MIC=80 ug/ml), and against Gram-negative bacteria E.coli (MIC=82 ug/ml) and P.aeruginosa (MIC=79 ug/ml).</text>
</comment>
<comment type="subunit">
    <text evidence="1">Monomer.</text>
</comment>
<comment type="subcellular location">
    <subcellularLocation>
        <location evidence="1">Secreted</location>
        <location evidence="1">Extracellular space</location>
    </subcellularLocation>
</comment>
<comment type="tissue specificity">
    <text evidence="1">Found in the liquid endosperm contained in green fruit of coconut palms, also known as coconut water (at protein level).</text>
</comment>
<comment type="mass spectrometry" mass="858.0" method="MALDI" evidence="1"/>
<evidence type="ECO:0000269" key="1">
    <source>
    </source>
</evidence>
<evidence type="ECO:0000303" key="2">
    <source>
    </source>
</evidence>
<evidence type="ECO:0000305" key="3"/>
<evidence type="ECO:0007829" key="4">
    <source>
        <dbReference type="PDB" id="2N0V"/>
    </source>
</evidence>
<name>AMP1_COCNU</name>